<evidence type="ECO:0000255" key="1">
    <source>
        <dbReference type="HAMAP-Rule" id="MF_01103"/>
    </source>
</evidence>
<evidence type="ECO:0000256" key="2">
    <source>
        <dbReference type="SAM" id="MobiDB-lite"/>
    </source>
</evidence>
<accession>Q6GH65</accession>
<feature type="chain" id="PRO_0000094989" description="UPF0291 protein SAR1351">
    <location>
        <begin position="1"/>
        <end position="79"/>
    </location>
</feature>
<feature type="region of interest" description="Disordered" evidence="2">
    <location>
        <begin position="56"/>
        <end position="79"/>
    </location>
</feature>
<feature type="compositionally biased region" description="Basic and acidic residues" evidence="2">
    <location>
        <begin position="64"/>
        <end position="79"/>
    </location>
</feature>
<gene>
    <name type="ordered locus">SAR1351</name>
</gene>
<comment type="subcellular location">
    <subcellularLocation>
        <location evidence="1">Cytoplasm</location>
    </subcellularLocation>
</comment>
<comment type="similarity">
    <text evidence="1">Belongs to the UPF0291 family.</text>
</comment>
<reference key="1">
    <citation type="journal article" date="2004" name="Proc. Natl. Acad. Sci. U.S.A.">
        <title>Complete genomes of two clinical Staphylococcus aureus strains: evidence for the rapid evolution of virulence and drug resistance.</title>
        <authorList>
            <person name="Holden M.T.G."/>
            <person name="Feil E.J."/>
            <person name="Lindsay J.A."/>
            <person name="Peacock S.J."/>
            <person name="Day N.P.J."/>
            <person name="Enright M.C."/>
            <person name="Foster T.J."/>
            <person name="Moore C.E."/>
            <person name="Hurst L."/>
            <person name="Atkin R."/>
            <person name="Barron A."/>
            <person name="Bason N."/>
            <person name="Bentley S.D."/>
            <person name="Chillingworth C."/>
            <person name="Chillingworth T."/>
            <person name="Churcher C."/>
            <person name="Clark L."/>
            <person name="Corton C."/>
            <person name="Cronin A."/>
            <person name="Doggett J."/>
            <person name="Dowd L."/>
            <person name="Feltwell T."/>
            <person name="Hance Z."/>
            <person name="Harris B."/>
            <person name="Hauser H."/>
            <person name="Holroyd S."/>
            <person name="Jagels K."/>
            <person name="James K.D."/>
            <person name="Lennard N."/>
            <person name="Line A."/>
            <person name="Mayes R."/>
            <person name="Moule S."/>
            <person name="Mungall K."/>
            <person name="Ormond D."/>
            <person name="Quail M.A."/>
            <person name="Rabbinowitsch E."/>
            <person name="Rutherford K.M."/>
            <person name="Sanders M."/>
            <person name="Sharp S."/>
            <person name="Simmonds M."/>
            <person name="Stevens K."/>
            <person name="Whitehead S."/>
            <person name="Barrell B.G."/>
            <person name="Spratt B.G."/>
            <person name="Parkhill J."/>
        </authorList>
    </citation>
    <scope>NUCLEOTIDE SEQUENCE [LARGE SCALE GENOMIC DNA]</scope>
    <source>
        <strain>MRSA252</strain>
    </source>
</reference>
<sequence length="79" mass="9203">MSNSDLNIERINELAKKKKEVGLTQEEAKEQTALRKAYLESFRKGFKQQIENTKVIDPEGNDVTPEKIKEIQQKRDNKN</sequence>
<name>Y1351_STAAR</name>
<organism>
    <name type="scientific">Staphylococcus aureus (strain MRSA252)</name>
    <dbReference type="NCBI Taxonomy" id="282458"/>
    <lineage>
        <taxon>Bacteria</taxon>
        <taxon>Bacillati</taxon>
        <taxon>Bacillota</taxon>
        <taxon>Bacilli</taxon>
        <taxon>Bacillales</taxon>
        <taxon>Staphylococcaceae</taxon>
        <taxon>Staphylococcus</taxon>
    </lineage>
</organism>
<keyword id="KW-0963">Cytoplasm</keyword>
<dbReference type="EMBL" id="BX571856">
    <property type="protein sequence ID" value="CAG40350.1"/>
    <property type="molecule type" value="Genomic_DNA"/>
</dbReference>
<dbReference type="RefSeq" id="WP_000071351.1">
    <property type="nucleotide sequence ID" value="NC_002952.2"/>
</dbReference>
<dbReference type="SMR" id="Q6GH65"/>
<dbReference type="KEGG" id="sar:SAR1351"/>
<dbReference type="HOGENOM" id="CLU_173137_0_2_9"/>
<dbReference type="Proteomes" id="UP000000596">
    <property type="component" value="Chromosome"/>
</dbReference>
<dbReference type="GO" id="GO:0005737">
    <property type="term" value="C:cytoplasm"/>
    <property type="evidence" value="ECO:0007669"/>
    <property type="project" value="UniProtKB-SubCell"/>
</dbReference>
<dbReference type="Gene3D" id="1.10.287.540">
    <property type="entry name" value="Helix hairpin bin"/>
    <property type="match status" value="1"/>
</dbReference>
<dbReference type="HAMAP" id="MF_01103">
    <property type="entry name" value="UPF0291"/>
    <property type="match status" value="1"/>
</dbReference>
<dbReference type="InterPro" id="IPR009242">
    <property type="entry name" value="DUF896"/>
</dbReference>
<dbReference type="PANTHER" id="PTHR37300">
    <property type="entry name" value="UPF0291 PROTEIN CBO2609/CLC_2481"/>
    <property type="match status" value="1"/>
</dbReference>
<dbReference type="PANTHER" id="PTHR37300:SF1">
    <property type="entry name" value="UPF0291 PROTEIN YNZC"/>
    <property type="match status" value="1"/>
</dbReference>
<dbReference type="Pfam" id="PF05979">
    <property type="entry name" value="DUF896"/>
    <property type="match status" value="1"/>
</dbReference>
<dbReference type="SUPFAM" id="SSF158221">
    <property type="entry name" value="YnzC-like"/>
    <property type="match status" value="1"/>
</dbReference>
<protein>
    <recommendedName>
        <fullName evidence="1">UPF0291 protein SAR1351</fullName>
    </recommendedName>
</protein>
<proteinExistence type="inferred from homology"/>